<proteinExistence type="evidence at transcript level"/>
<reference key="1">
    <citation type="journal article" date="2009" name="Mol. Biol. Evol.">
        <title>Molecular evolution, functional variation, and proposed nomenclature of the gene family that includes sphingomyelinase D in sicariid spider venoms.</title>
        <authorList>
            <person name="Binford G.J."/>
            <person name="Bodner M.R."/>
            <person name="Cordes M.H."/>
            <person name="Baldwin K.L."/>
            <person name="Rynerson M.R."/>
            <person name="Burns S.N."/>
            <person name="Zobel-Thropp P.A."/>
        </authorList>
    </citation>
    <scope>NUCLEOTIDE SEQUENCE [MRNA]</scope>
    <scope>NOMENCLATURE</scope>
    <source>
        <tissue>Venom gland</tissue>
    </source>
</reference>
<organism>
    <name type="scientific">Sicarius peruensis</name>
    <name type="common">Six-eyed sand spider</name>
    <dbReference type="NCBI Taxonomy" id="571541"/>
    <lineage>
        <taxon>Eukaryota</taxon>
        <taxon>Metazoa</taxon>
        <taxon>Ecdysozoa</taxon>
        <taxon>Arthropoda</taxon>
        <taxon>Chelicerata</taxon>
        <taxon>Arachnida</taxon>
        <taxon>Araneae</taxon>
        <taxon>Araneomorphae</taxon>
        <taxon>Haplogynae</taxon>
        <taxon>Scytodoidea</taxon>
        <taxon>Sicariidae</taxon>
        <taxon>Sicarius</taxon>
    </lineage>
</organism>
<comment type="function">
    <text evidence="1 3">Dermonecrotic toxins cleave the phosphodiester linkage between the phosphate and headgroup of certain phospholipids (sphingolipid and lysolipid substrates), forming an alcohol (often choline) and a cyclic phosphate (By similarity). This toxin acts on sphingomyelin (SM) (By similarity). It may also act on ceramide phosphoethanolamine (CPE), lysophosphatidylcholine (LPC) and lysophosphatidylethanolamine (LPE), but not on lysophosphatidylserine (LPS), and lysophosphatidylglycerol (LPG) (By similarity). It acts by transphosphatidylation, releasing exclusively cyclic phosphate products as second products (By similarity). Induces dermonecrosis, hemolysis, increased vascular permeability, edema, inflammatory response, and platelet aggregation (By similarity).</text>
</comment>
<comment type="catalytic activity">
    <reaction evidence="1">
        <text>an N-(acyl)-sphingosylphosphocholine = an N-(acyl)-sphingosyl-1,3-cyclic phosphate + choline</text>
        <dbReference type="Rhea" id="RHEA:60652"/>
        <dbReference type="ChEBI" id="CHEBI:15354"/>
        <dbReference type="ChEBI" id="CHEBI:64583"/>
        <dbReference type="ChEBI" id="CHEBI:143892"/>
    </reaction>
</comment>
<comment type="catalytic activity">
    <reaction evidence="1">
        <text>an N-(acyl)-sphingosylphosphoethanolamine = an N-(acyl)-sphingosyl-1,3-cyclic phosphate + ethanolamine</text>
        <dbReference type="Rhea" id="RHEA:60648"/>
        <dbReference type="ChEBI" id="CHEBI:57603"/>
        <dbReference type="ChEBI" id="CHEBI:143891"/>
        <dbReference type="ChEBI" id="CHEBI:143892"/>
    </reaction>
</comment>
<comment type="catalytic activity">
    <reaction evidence="1">
        <text>a 1-acyl-sn-glycero-3-phosphocholine = a 1-acyl-sn-glycero-2,3-cyclic phosphate + choline</text>
        <dbReference type="Rhea" id="RHEA:60700"/>
        <dbReference type="ChEBI" id="CHEBI:15354"/>
        <dbReference type="ChEBI" id="CHEBI:58168"/>
        <dbReference type="ChEBI" id="CHEBI:143947"/>
    </reaction>
</comment>
<comment type="catalytic activity">
    <reaction evidence="1">
        <text>a 1-acyl-sn-glycero-3-phosphoethanolamine = a 1-acyl-sn-glycero-2,3-cyclic phosphate + ethanolamine</text>
        <dbReference type="Rhea" id="RHEA:60704"/>
        <dbReference type="ChEBI" id="CHEBI:57603"/>
        <dbReference type="ChEBI" id="CHEBI:64381"/>
        <dbReference type="ChEBI" id="CHEBI:143947"/>
    </reaction>
</comment>
<comment type="cofactor">
    <cofactor evidence="5">
        <name>Mg(2+)</name>
        <dbReference type="ChEBI" id="CHEBI:18420"/>
    </cofactor>
    <text evidence="5">Binds 1 Mg(2+) ion per subunit.</text>
</comment>
<comment type="subcellular location">
    <subcellularLocation>
        <location evidence="8">Secreted</location>
    </subcellularLocation>
</comment>
<comment type="tissue specificity">
    <text evidence="8">Expressed by the venom gland.</text>
</comment>
<comment type="similarity">
    <text evidence="7">Belongs to the arthropod phospholipase D family. Class II subfamily.</text>
</comment>
<comment type="caution">
    <text evidence="1 2 4">The most common activity assay for dermonecrotic toxins detects enzymatic activity by monitoring choline release from substrate. Liberation of choline from sphingomyelin (SM) or lysophosphatidylcholine (LPC) is commonly assumed to result from substrate hydrolysis, giving either ceramide-1-phosphate (C1P) or lysophosphatidic acid (LPA), respectively, as a second product. However, two studies from Lajoie and colleagues (2013 and 2015) report the observation of exclusive formation of cyclic phosphate products as second products, resulting from intramolecular transphosphatidylation. Cyclic phosphates have vastly different biological properties from their monoester counterparts, and they may be relevant to the pathology of brown spider envenomation.</text>
</comment>
<sequence length="271" mass="31266">MGHMVDDLKMVDYYVGKGANGLELDVTFNSNGVAEYTFHGVPCDCFRSCTRYENINTYLDYVRQLTTPGDPKFQEKLIFLIMDLKLKNSPSSYAQFNAGINIADKLSQYYWKDDGKARAYFLISVPYVSQTAFIRGFQHRFEEKGLEKYYEKIGWDFSANEDLNSIRAAYQKLNITGHIWQSDGITNCLTRGDTRLKEAISKRDTPGWHINKVYTWSLDKVNSIKYALNLGVDGVMSNYAETLVTILSEDPFKQKFRLATYEDNPWETFKP</sequence>
<dbReference type="EC" id="4.6.1.-" evidence="4"/>
<dbReference type="EMBL" id="FJ171488">
    <property type="protein sequence ID" value="ACN48984.1"/>
    <property type="molecule type" value="mRNA"/>
</dbReference>
<dbReference type="SMR" id="C0JB53"/>
<dbReference type="GO" id="GO:0005576">
    <property type="term" value="C:extracellular region"/>
    <property type="evidence" value="ECO:0007669"/>
    <property type="project" value="UniProtKB-SubCell"/>
</dbReference>
<dbReference type="GO" id="GO:0016829">
    <property type="term" value="F:lyase activity"/>
    <property type="evidence" value="ECO:0007669"/>
    <property type="project" value="UniProtKB-KW"/>
</dbReference>
<dbReference type="GO" id="GO:0046872">
    <property type="term" value="F:metal ion binding"/>
    <property type="evidence" value="ECO:0007669"/>
    <property type="project" value="UniProtKB-KW"/>
</dbReference>
<dbReference type="GO" id="GO:0008081">
    <property type="term" value="F:phosphoric diester hydrolase activity"/>
    <property type="evidence" value="ECO:0007669"/>
    <property type="project" value="InterPro"/>
</dbReference>
<dbReference type="GO" id="GO:0090729">
    <property type="term" value="F:toxin activity"/>
    <property type="evidence" value="ECO:0007669"/>
    <property type="project" value="UniProtKB-KW"/>
</dbReference>
<dbReference type="GO" id="GO:0031640">
    <property type="term" value="P:killing of cells of another organism"/>
    <property type="evidence" value="ECO:0007669"/>
    <property type="project" value="UniProtKB-KW"/>
</dbReference>
<dbReference type="GO" id="GO:0016042">
    <property type="term" value="P:lipid catabolic process"/>
    <property type="evidence" value="ECO:0007669"/>
    <property type="project" value="UniProtKB-KW"/>
</dbReference>
<dbReference type="CDD" id="cd08576">
    <property type="entry name" value="GDPD_like_SMaseD_PLD"/>
    <property type="match status" value="1"/>
</dbReference>
<dbReference type="Gene3D" id="3.20.20.190">
    <property type="entry name" value="Phosphatidylinositol (PI) phosphodiesterase"/>
    <property type="match status" value="1"/>
</dbReference>
<dbReference type="InterPro" id="IPR017946">
    <property type="entry name" value="PLC-like_Pdiesterase_TIM-brl"/>
</dbReference>
<dbReference type="SUPFAM" id="SSF51695">
    <property type="entry name" value="PLC-like phosphodiesterases"/>
    <property type="match status" value="1"/>
</dbReference>
<feature type="chain" id="PRO_0000392869" description="Dermonecrotic toxin SpeSicTox-betaIF1">
    <location>
        <begin position="1" status="less than"/>
        <end position="271"/>
    </location>
</feature>
<feature type="active site" evidence="5">
    <location>
        <position position="3"/>
    </location>
</feature>
<feature type="active site" description="Nucleophile" evidence="5">
    <location>
        <position position="39"/>
    </location>
</feature>
<feature type="binding site" evidence="5">
    <location>
        <position position="23"/>
    </location>
    <ligand>
        <name>Mg(2+)</name>
        <dbReference type="ChEBI" id="CHEBI:18420"/>
    </ligand>
</feature>
<feature type="binding site" evidence="5">
    <location>
        <position position="25"/>
    </location>
    <ligand>
        <name>Mg(2+)</name>
        <dbReference type="ChEBI" id="CHEBI:18420"/>
    </ligand>
</feature>
<feature type="binding site" evidence="5">
    <location>
        <position position="83"/>
    </location>
    <ligand>
        <name>Mg(2+)</name>
        <dbReference type="ChEBI" id="CHEBI:18420"/>
    </ligand>
</feature>
<feature type="disulfide bond" evidence="3">
    <location>
        <begin position="43"/>
        <end position="49"/>
    </location>
</feature>
<feature type="disulfide bond" evidence="3">
    <location>
        <begin position="45"/>
        <end position="188"/>
    </location>
</feature>
<feature type="non-terminal residue">
    <location>
        <position position="1"/>
    </location>
</feature>
<name>B1V_SICPE</name>
<keyword id="KW-0204">Cytolysis</keyword>
<keyword id="KW-1061">Dermonecrotic toxin</keyword>
<keyword id="KW-1015">Disulfide bond</keyword>
<keyword id="KW-0354">Hemolysis</keyword>
<keyword id="KW-0442">Lipid degradation</keyword>
<keyword id="KW-0443">Lipid metabolism</keyword>
<keyword id="KW-0456">Lyase</keyword>
<keyword id="KW-0460">Magnesium</keyword>
<keyword id="KW-0479">Metal-binding</keyword>
<keyword id="KW-0964">Secreted</keyword>
<keyword id="KW-0800">Toxin</keyword>
<accession>C0JB53</accession>
<evidence type="ECO:0000250" key="1">
    <source>
        <dbReference type="UniProtKB" id="A0A0D4WTV1"/>
    </source>
</evidence>
<evidence type="ECO:0000250" key="2">
    <source>
        <dbReference type="UniProtKB" id="A0A0D4WV12"/>
    </source>
</evidence>
<evidence type="ECO:0000250" key="3">
    <source>
        <dbReference type="UniProtKB" id="P0CE80"/>
    </source>
</evidence>
<evidence type="ECO:0000250" key="4">
    <source>
        <dbReference type="UniProtKB" id="Q4ZFU2"/>
    </source>
</evidence>
<evidence type="ECO:0000250" key="5">
    <source>
        <dbReference type="UniProtKB" id="Q8I914"/>
    </source>
</evidence>
<evidence type="ECO:0000303" key="6">
    <source>
    </source>
</evidence>
<evidence type="ECO:0000305" key="7"/>
<evidence type="ECO:0000305" key="8">
    <source>
    </source>
</evidence>
<protein>
    <recommendedName>
        <fullName evidence="6">Dermonecrotic toxin SpeSicTox-betaIF1</fullName>
        <ecNumber evidence="4">4.6.1.-</ecNumber>
    </recommendedName>
    <alternativeName>
        <fullName>Phospholipase D</fullName>
        <shortName>PLD</shortName>
    </alternativeName>
    <alternativeName>
        <fullName>Sphingomyelin phosphodiesterase D</fullName>
        <shortName>SMD</shortName>
        <shortName>SMase D</shortName>
        <shortName>Sphingomyelinase D</shortName>
    </alternativeName>
</protein>